<comment type="function">
    <text evidence="1 2">Required for accurate chromosome segregation in meiosis. Required for pairing to occur between homologous chromosomes. Acts in early recombination steps and ensures pairing fidelity and proper repair of meiotic DNA double-strand-breaks (PubMed:14704428, PubMed:19918061). Regulates recombination and pairing of homologous chromosomes during meiotic prophase by controlling transport of RAD50 from cytoplasm to the nucleus. May affect pairing of the gene-rich fraction of the genome rather than preventing pairing between repetitive DNA elements (PubMed:19918061).</text>
</comment>
<comment type="subcellular location">
    <subcellularLocation>
        <location evidence="2">Cytoplasm</location>
    </subcellularLocation>
    <text evidence="2">Localizes to the cytoplasm during leptotene, zygotene and pachytene.</text>
</comment>
<comment type="disruption phenotype">
    <text evidence="1">Male and female sterility. During meiosis, synapsis is uncoupled from recombination and pairing in the mutant gametes.</text>
</comment>
<feature type="chain" id="PRO_0000435707" description="Protein POOR HOMOLOGOUS SYNAPSIS 1">
    <location>
        <begin position="1"/>
        <end position="347"/>
    </location>
</feature>
<feature type="mutagenesis site" description="Meiotic sterility." evidence="2">
    <original>R</original>
    <variation>H</variation>
    <location>
        <position position="148"/>
    </location>
</feature>
<proteinExistence type="evidence at protein level"/>
<protein>
    <recommendedName>
        <fullName evidence="3">Protein POOR HOMOLOGOUS SYNAPSIS 1</fullName>
    </recommendedName>
</protein>
<keyword id="KW-0963">Cytoplasm</keyword>
<keyword id="KW-0469">Meiosis</keyword>
<keyword id="KW-1185">Reference proteome</keyword>
<evidence type="ECO:0000269" key="1">
    <source>
    </source>
</evidence>
<evidence type="ECO:0000269" key="2">
    <source>
    </source>
</evidence>
<evidence type="ECO:0000303" key="3">
    <source>
    </source>
</evidence>
<evidence type="ECO:0000312" key="4">
    <source>
        <dbReference type="EMBL" id="AFW86601.1"/>
    </source>
</evidence>
<name>PHS1_MAIZE</name>
<sequence length="347" mass="38258">MADAADSSMALVHSSLADSVLTSPRTLRQGQKWEVEYARYFGTPRRDPTAAPPSGLRYIMRGVHRHQGTWIPASCPASLCVCHPSLPSAVPVLTISIGDVVFEEHFVSILNFSWPQVTCVTQCPIRGSRVVFVSFCDKFKQIQKFAVRFPQPCDAESFLSCVECSCGSSGTMDIIPFGSDYVCEDSSASEYIVSNGLHHRLDDASNLEEQCFDHTIDEPPMNYHEETDQHVLEPLSASNTSNNSAFPPSFNQMLKSCSIDYDQEEPCPLAASNHVLQEVYVLDTSHDVANEERTAGKGMDAAEGVDASILTYDLMARIKTYMADESFNDMLLKLDKAIDELGGDMSL</sequence>
<accession>Q6W2J0</accession>
<reference key="1">
    <citation type="journal article" date="2004" name="Science">
        <title>Coordination of meiotic recombination, pairing, and synapsis by PHS1.</title>
        <authorList>
            <person name="Pawlowski W.P."/>
            <person name="Golubovskaya I.N."/>
            <person name="Timofejeva L."/>
            <person name="Meeley R.B."/>
            <person name="Sheridan W.F."/>
            <person name="Cande W.Z."/>
        </authorList>
    </citation>
    <scope>NUCLEOTIDE SEQUENCE [GENOMIC DNA]</scope>
    <scope>FUNCTION</scope>
    <scope>DISRUPTION PHENOTYPE</scope>
    <source>
        <strain>cv. B73</strain>
    </source>
</reference>
<reference key="2">
    <citation type="journal article" date="2009" name="Science">
        <title>The B73 maize genome: complexity, diversity, and dynamics.</title>
        <authorList>
            <person name="Schnable P.S."/>
            <person name="Ware D."/>
            <person name="Fulton R.S."/>
            <person name="Stein J.C."/>
            <person name="Wei F."/>
            <person name="Pasternak S."/>
            <person name="Liang C."/>
            <person name="Zhang J."/>
            <person name="Fulton L."/>
            <person name="Graves T.A."/>
            <person name="Minx P."/>
            <person name="Reily A.D."/>
            <person name="Courtney L."/>
            <person name="Kruchowski S.S."/>
            <person name="Tomlinson C."/>
            <person name="Strong C."/>
            <person name="Delehaunty K."/>
            <person name="Fronick C."/>
            <person name="Courtney B."/>
            <person name="Rock S.M."/>
            <person name="Belter E."/>
            <person name="Du F."/>
            <person name="Kim K."/>
            <person name="Abbott R.M."/>
            <person name="Cotton M."/>
            <person name="Levy A."/>
            <person name="Marchetto P."/>
            <person name="Ochoa K."/>
            <person name="Jackson S.M."/>
            <person name="Gillam B."/>
            <person name="Chen W."/>
            <person name="Yan L."/>
            <person name="Higginbotham J."/>
            <person name="Cardenas M."/>
            <person name="Waligorski J."/>
            <person name="Applebaum E."/>
            <person name="Phelps L."/>
            <person name="Falcone J."/>
            <person name="Kanchi K."/>
            <person name="Thane T."/>
            <person name="Scimone A."/>
            <person name="Thane N."/>
            <person name="Henke J."/>
            <person name="Wang T."/>
            <person name="Ruppert J."/>
            <person name="Shah N."/>
            <person name="Rotter K."/>
            <person name="Hodges J."/>
            <person name="Ingenthron E."/>
            <person name="Cordes M."/>
            <person name="Kohlberg S."/>
            <person name="Sgro J."/>
            <person name="Delgado B."/>
            <person name="Mead K."/>
            <person name="Chinwalla A."/>
            <person name="Leonard S."/>
            <person name="Crouse K."/>
            <person name="Collura K."/>
            <person name="Kudrna D."/>
            <person name="Currie J."/>
            <person name="He R."/>
            <person name="Angelova A."/>
            <person name="Rajasekar S."/>
            <person name="Mueller T."/>
            <person name="Lomeli R."/>
            <person name="Scara G."/>
            <person name="Ko A."/>
            <person name="Delaney K."/>
            <person name="Wissotski M."/>
            <person name="Lopez G."/>
            <person name="Campos D."/>
            <person name="Braidotti M."/>
            <person name="Ashley E."/>
            <person name="Golser W."/>
            <person name="Kim H."/>
            <person name="Lee S."/>
            <person name="Lin J."/>
            <person name="Dujmic Z."/>
            <person name="Kim W."/>
            <person name="Talag J."/>
            <person name="Zuccolo A."/>
            <person name="Fan C."/>
            <person name="Sebastian A."/>
            <person name="Kramer M."/>
            <person name="Spiegel L."/>
            <person name="Nascimento L."/>
            <person name="Zutavern T."/>
            <person name="Miller B."/>
            <person name="Ambroise C."/>
            <person name="Muller S."/>
            <person name="Spooner W."/>
            <person name="Narechania A."/>
            <person name="Ren L."/>
            <person name="Wei S."/>
            <person name="Kumari S."/>
            <person name="Faga B."/>
            <person name="Levy M.J."/>
            <person name="McMahan L."/>
            <person name="Van Buren P."/>
            <person name="Vaughn M.W."/>
            <person name="Ying K."/>
            <person name="Yeh C.-T."/>
            <person name="Emrich S.J."/>
            <person name="Jia Y."/>
            <person name="Kalyanaraman A."/>
            <person name="Hsia A.-P."/>
            <person name="Barbazuk W.B."/>
            <person name="Baucom R.S."/>
            <person name="Brutnell T.P."/>
            <person name="Carpita N.C."/>
            <person name="Chaparro C."/>
            <person name="Chia J.-M."/>
            <person name="Deragon J.-M."/>
            <person name="Estill J.C."/>
            <person name="Fu Y."/>
            <person name="Jeddeloh J.A."/>
            <person name="Han Y."/>
            <person name="Lee H."/>
            <person name="Li P."/>
            <person name="Lisch D.R."/>
            <person name="Liu S."/>
            <person name="Liu Z."/>
            <person name="Nagel D.H."/>
            <person name="McCann M.C."/>
            <person name="SanMiguel P."/>
            <person name="Myers A.M."/>
            <person name="Nettleton D."/>
            <person name="Nguyen J."/>
            <person name="Penning B.W."/>
            <person name="Ponnala L."/>
            <person name="Schneider K.L."/>
            <person name="Schwartz D.C."/>
            <person name="Sharma A."/>
            <person name="Soderlund C."/>
            <person name="Springer N.M."/>
            <person name="Sun Q."/>
            <person name="Wang H."/>
            <person name="Waterman M."/>
            <person name="Westerman R."/>
            <person name="Wolfgruber T.K."/>
            <person name="Yang L."/>
            <person name="Yu Y."/>
            <person name="Zhang L."/>
            <person name="Zhou S."/>
            <person name="Zhu Q."/>
            <person name="Bennetzen J.L."/>
            <person name="Dawe R.K."/>
            <person name="Jiang J."/>
            <person name="Jiang N."/>
            <person name="Presting G.G."/>
            <person name="Wessler S.R."/>
            <person name="Aluru S."/>
            <person name="Martienssen R.A."/>
            <person name="Clifton S.W."/>
            <person name="McCombie W.R."/>
            <person name="Wing R.A."/>
            <person name="Wilson R.K."/>
        </authorList>
    </citation>
    <scope>NUCLEOTIDE SEQUENCE [LARGE SCALE GENOMIC DNA]</scope>
    <source>
        <strain>cv. B73</strain>
    </source>
</reference>
<reference key="3">
    <citation type="journal article" date="2009" name="PLoS Genet.">
        <title>Sequencing, mapping, and analysis of 27,455 maize full-length cDNAs.</title>
        <authorList>
            <person name="Soderlund C."/>
            <person name="Descour A."/>
            <person name="Kudrna D."/>
            <person name="Bomhoff M."/>
            <person name="Boyd L."/>
            <person name="Currie J."/>
            <person name="Angelova A."/>
            <person name="Collura K."/>
            <person name="Wissotski M."/>
            <person name="Ashley E."/>
            <person name="Morrow D."/>
            <person name="Fernandes J."/>
            <person name="Walbot V."/>
            <person name="Yu Y."/>
        </authorList>
    </citation>
    <scope>NUCLEOTIDE SEQUENCE [LARGE SCALE MRNA]</scope>
    <source>
        <strain>cv. B73</strain>
    </source>
</reference>
<reference key="4">
    <citation type="journal article" date="2009" name="Proc. Natl. Acad. Sci. U.S.A.">
        <title>PHS1 regulates meiotic recombination and homologous chromosome pairing by controlling the transport of RAD50 to the nucleus.</title>
        <authorList>
            <person name="Ronceret A."/>
            <person name="Doutriaux M.P."/>
            <person name="Golubovskaya I.N."/>
            <person name="Pawlowski W.P."/>
        </authorList>
    </citation>
    <scope>FUNCTION</scope>
    <scope>SUBCELLULAR LOCATION</scope>
    <scope>MUTAGENESIS OF ARG-148</scope>
</reference>
<dbReference type="EMBL" id="AY316742">
    <property type="protein sequence ID" value="AAQ84720.1"/>
    <property type="molecule type" value="Genomic_DNA"/>
</dbReference>
<dbReference type="EMBL" id="CM000785">
    <property type="protein sequence ID" value="AFW86601.1"/>
    <property type="molecule type" value="Genomic_DNA"/>
</dbReference>
<dbReference type="EMBL" id="BT041980">
    <property type="protein sequence ID" value="ACF86985.1"/>
    <property type="molecule type" value="mRNA"/>
</dbReference>
<dbReference type="RefSeq" id="NP_001141750.1">
    <property type="nucleotide sequence ID" value="NM_001148278.1"/>
</dbReference>
<dbReference type="STRING" id="4577.Q6W2J0"/>
<dbReference type="PaxDb" id="4577-GRMZM2G100103_P01"/>
<dbReference type="EnsemblPlants" id="Zm00001eb382430_T004">
    <property type="protein sequence ID" value="Zm00001eb382430_P004"/>
    <property type="gene ID" value="Zm00001eb382430"/>
</dbReference>
<dbReference type="GeneID" id="100273885"/>
<dbReference type="Gramene" id="Zm00001eb382430_T004">
    <property type="protein sequence ID" value="Zm00001eb382430_P004"/>
    <property type="gene ID" value="Zm00001eb382430"/>
</dbReference>
<dbReference type="KEGG" id="zma:100273885"/>
<dbReference type="eggNOG" id="ENOG502RYMD">
    <property type="taxonomic scope" value="Eukaryota"/>
</dbReference>
<dbReference type="HOGENOM" id="CLU_044780_0_0_1"/>
<dbReference type="InParanoid" id="Q6W2J0"/>
<dbReference type="OrthoDB" id="1864854at2759"/>
<dbReference type="Proteomes" id="UP000007305">
    <property type="component" value="Chromosome 9"/>
</dbReference>
<dbReference type="ExpressionAtlas" id="Q6W2J0">
    <property type="expression patterns" value="baseline and differential"/>
</dbReference>
<dbReference type="GO" id="GO:0005737">
    <property type="term" value="C:cytoplasm"/>
    <property type="evidence" value="ECO:0000314"/>
    <property type="project" value="UniProtKB"/>
</dbReference>
<dbReference type="GO" id="GO:0007129">
    <property type="term" value="P:homologous chromosome pairing at meiosis"/>
    <property type="evidence" value="ECO:0000315"/>
    <property type="project" value="UniProtKB"/>
</dbReference>
<dbReference type="Pfam" id="PF25349">
    <property type="entry name" value="PH_PHS1"/>
    <property type="match status" value="1"/>
</dbReference>
<organism>
    <name type="scientific">Zea mays</name>
    <name type="common">Maize</name>
    <dbReference type="NCBI Taxonomy" id="4577"/>
    <lineage>
        <taxon>Eukaryota</taxon>
        <taxon>Viridiplantae</taxon>
        <taxon>Streptophyta</taxon>
        <taxon>Embryophyta</taxon>
        <taxon>Tracheophyta</taxon>
        <taxon>Spermatophyta</taxon>
        <taxon>Magnoliopsida</taxon>
        <taxon>Liliopsida</taxon>
        <taxon>Poales</taxon>
        <taxon>Poaceae</taxon>
        <taxon>PACMAD clade</taxon>
        <taxon>Panicoideae</taxon>
        <taxon>Andropogonodae</taxon>
        <taxon>Andropogoneae</taxon>
        <taxon>Tripsacinae</taxon>
        <taxon>Zea</taxon>
    </lineage>
</organism>
<gene>
    <name evidence="3" type="primary">PHS1</name>
    <name evidence="4" type="ORF">ZEAMMB73_074178</name>
</gene>